<evidence type="ECO:0000255" key="1">
    <source>
        <dbReference type="HAMAP-Rule" id="MF_00453"/>
    </source>
</evidence>
<dbReference type="EC" id="4.1.1.49" evidence="1"/>
<dbReference type="EMBL" id="CP000817">
    <property type="protein sequence ID" value="ACA41711.1"/>
    <property type="molecule type" value="Genomic_DNA"/>
</dbReference>
<dbReference type="RefSeq" id="WP_012295740.1">
    <property type="nucleotide sequence ID" value="NC_010382.1"/>
</dbReference>
<dbReference type="SMR" id="B1HXZ6"/>
<dbReference type="EnsemblBacteria" id="ACA41711">
    <property type="protein sequence ID" value="ACA41711"/>
    <property type="gene ID" value="Bsph_4252"/>
</dbReference>
<dbReference type="KEGG" id="lsp:Bsph_4252"/>
<dbReference type="HOGENOM" id="CLU_018247_0_1_9"/>
<dbReference type="UniPathway" id="UPA00138"/>
<dbReference type="Proteomes" id="UP000002164">
    <property type="component" value="Chromosome"/>
</dbReference>
<dbReference type="GO" id="GO:0005829">
    <property type="term" value="C:cytosol"/>
    <property type="evidence" value="ECO:0007669"/>
    <property type="project" value="TreeGrafter"/>
</dbReference>
<dbReference type="GO" id="GO:0005524">
    <property type="term" value="F:ATP binding"/>
    <property type="evidence" value="ECO:0007669"/>
    <property type="project" value="UniProtKB-UniRule"/>
</dbReference>
<dbReference type="GO" id="GO:0046872">
    <property type="term" value="F:metal ion binding"/>
    <property type="evidence" value="ECO:0007669"/>
    <property type="project" value="UniProtKB-KW"/>
</dbReference>
<dbReference type="GO" id="GO:0004612">
    <property type="term" value="F:phosphoenolpyruvate carboxykinase (ATP) activity"/>
    <property type="evidence" value="ECO:0007669"/>
    <property type="project" value="UniProtKB-UniRule"/>
</dbReference>
<dbReference type="GO" id="GO:0006094">
    <property type="term" value="P:gluconeogenesis"/>
    <property type="evidence" value="ECO:0007669"/>
    <property type="project" value="UniProtKB-UniRule"/>
</dbReference>
<dbReference type="CDD" id="cd00484">
    <property type="entry name" value="PEPCK_ATP"/>
    <property type="match status" value="1"/>
</dbReference>
<dbReference type="FunFam" id="2.170.8.10:FF:000001">
    <property type="entry name" value="Phosphoenolpyruvate carboxykinase (ATP)"/>
    <property type="match status" value="1"/>
</dbReference>
<dbReference type="FunFam" id="3.40.449.10:FF:000001">
    <property type="entry name" value="Phosphoenolpyruvate carboxykinase (ATP)"/>
    <property type="match status" value="1"/>
</dbReference>
<dbReference type="Gene3D" id="3.90.228.20">
    <property type="match status" value="1"/>
</dbReference>
<dbReference type="Gene3D" id="3.40.449.10">
    <property type="entry name" value="Phosphoenolpyruvate Carboxykinase, domain 1"/>
    <property type="match status" value="1"/>
</dbReference>
<dbReference type="Gene3D" id="2.170.8.10">
    <property type="entry name" value="Phosphoenolpyruvate Carboxykinase, domain 2"/>
    <property type="match status" value="1"/>
</dbReference>
<dbReference type="HAMAP" id="MF_00453">
    <property type="entry name" value="PEPCK_ATP"/>
    <property type="match status" value="1"/>
</dbReference>
<dbReference type="InterPro" id="IPR001272">
    <property type="entry name" value="PEP_carboxykinase_ATP"/>
</dbReference>
<dbReference type="InterPro" id="IPR013035">
    <property type="entry name" value="PEP_carboxykinase_C"/>
</dbReference>
<dbReference type="InterPro" id="IPR008210">
    <property type="entry name" value="PEP_carboxykinase_N"/>
</dbReference>
<dbReference type="InterPro" id="IPR015994">
    <property type="entry name" value="PEPCK_ATP_CS"/>
</dbReference>
<dbReference type="NCBIfam" id="TIGR00224">
    <property type="entry name" value="pckA"/>
    <property type="match status" value="1"/>
</dbReference>
<dbReference type="NCBIfam" id="NF006820">
    <property type="entry name" value="PRK09344.1-2"/>
    <property type="match status" value="1"/>
</dbReference>
<dbReference type="NCBIfam" id="NF006821">
    <property type="entry name" value="PRK09344.1-3"/>
    <property type="match status" value="1"/>
</dbReference>
<dbReference type="PANTHER" id="PTHR30031:SF0">
    <property type="entry name" value="PHOSPHOENOLPYRUVATE CARBOXYKINASE (ATP)"/>
    <property type="match status" value="1"/>
</dbReference>
<dbReference type="PANTHER" id="PTHR30031">
    <property type="entry name" value="PHOSPHOENOLPYRUVATE CARBOXYKINASE ATP"/>
    <property type="match status" value="1"/>
</dbReference>
<dbReference type="Pfam" id="PF01293">
    <property type="entry name" value="PEPCK_ATP"/>
    <property type="match status" value="1"/>
</dbReference>
<dbReference type="PIRSF" id="PIRSF006294">
    <property type="entry name" value="PEP_crbxkin"/>
    <property type="match status" value="1"/>
</dbReference>
<dbReference type="SUPFAM" id="SSF68923">
    <property type="entry name" value="PEP carboxykinase N-terminal domain"/>
    <property type="match status" value="1"/>
</dbReference>
<dbReference type="SUPFAM" id="SSF53795">
    <property type="entry name" value="PEP carboxykinase-like"/>
    <property type="match status" value="1"/>
</dbReference>
<dbReference type="PROSITE" id="PS00532">
    <property type="entry name" value="PEPCK_ATP"/>
    <property type="match status" value="1"/>
</dbReference>
<sequence length="528" mass="57506">MNSVEIANELKELLNGGNINVQLSVPQLAEKATSRGEAMLTVDGAVRAETGKYTGRSPKDKYTVEEESTKDQIDWGKVNQPISSEVFDNLYVKVIKYLKERDELFVFKGFAGADKDSQLSIQVINEYAWHNLFAHQLFIRPTKEELASHVADFTVISAPNFKADPAVDGTASETFIIVSLEKKIILIGGTEYAGEMKKSIFGIMNYLLPQQGILSMHCSANVGEAGDVALFFGLSGTGKTTLSADPDRKLIGDDEHGWSDNGVFNIEGGCYAKTINLSAEKEPEIYNAIRFGSVLENVAVDPETRICDYDDGSLTENTRVAYPIQYIENIVDPSVAGHPKTIIFLTADAFGVLPPISKLTKEQAMYHFLSGFTSKLAGTERGVTEPEPVFSTCFGSPFLPLPATVYAEMLGQKIDEHGAQVYLVNTGWTGGEYGTGSRMKLSYTRTMVRAAIDGKLTNVETTQDAVFGLHIPTAVEGVPSQVLNPREAWADKAAYDAKAAELAGLFNENFKKFANVSEAITTLGGPLK</sequence>
<comment type="function">
    <text evidence="1">Involved in the gluconeogenesis. Catalyzes the conversion of oxaloacetate (OAA) to phosphoenolpyruvate (PEP) through direct phosphoryl transfer between the nucleoside triphosphate and OAA.</text>
</comment>
<comment type="catalytic activity">
    <reaction evidence="1">
        <text>oxaloacetate + ATP = phosphoenolpyruvate + ADP + CO2</text>
        <dbReference type="Rhea" id="RHEA:18617"/>
        <dbReference type="ChEBI" id="CHEBI:16452"/>
        <dbReference type="ChEBI" id="CHEBI:16526"/>
        <dbReference type="ChEBI" id="CHEBI:30616"/>
        <dbReference type="ChEBI" id="CHEBI:58702"/>
        <dbReference type="ChEBI" id="CHEBI:456216"/>
        <dbReference type="EC" id="4.1.1.49"/>
    </reaction>
</comment>
<comment type="cofactor">
    <cofactor evidence="1">
        <name>Mn(2+)</name>
        <dbReference type="ChEBI" id="CHEBI:29035"/>
    </cofactor>
    <text evidence="1">Binds 1 Mn(2+) ion per subunit.</text>
</comment>
<comment type="pathway">
    <text evidence="1">Carbohydrate biosynthesis; gluconeogenesis.</text>
</comment>
<comment type="subcellular location">
    <subcellularLocation>
        <location evidence="1">Cytoplasm</location>
    </subcellularLocation>
</comment>
<comment type="similarity">
    <text evidence="1">Belongs to the phosphoenolpyruvate carboxykinase (ATP) family.</text>
</comment>
<proteinExistence type="inferred from homology"/>
<name>PCKA_LYSSC</name>
<keyword id="KW-0067">ATP-binding</keyword>
<keyword id="KW-0963">Cytoplasm</keyword>
<keyword id="KW-0210">Decarboxylase</keyword>
<keyword id="KW-0312">Gluconeogenesis</keyword>
<keyword id="KW-0456">Lyase</keyword>
<keyword id="KW-0464">Manganese</keyword>
<keyword id="KW-0479">Metal-binding</keyword>
<keyword id="KW-0547">Nucleotide-binding</keyword>
<organism>
    <name type="scientific">Lysinibacillus sphaericus (strain C3-41)</name>
    <dbReference type="NCBI Taxonomy" id="444177"/>
    <lineage>
        <taxon>Bacteria</taxon>
        <taxon>Bacillati</taxon>
        <taxon>Bacillota</taxon>
        <taxon>Bacilli</taxon>
        <taxon>Bacillales</taxon>
        <taxon>Bacillaceae</taxon>
        <taxon>Lysinibacillus</taxon>
    </lineage>
</organism>
<reference key="1">
    <citation type="journal article" date="2008" name="J. Bacteriol.">
        <title>Complete genome sequence of the mosquitocidal bacterium Bacillus sphaericus C3-41 and comparison with those of closely related Bacillus species.</title>
        <authorList>
            <person name="Hu X."/>
            <person name="Fan W."/>
            <person name="Han B."/>
            <person name="Liu H."/>
            <person name="Zheng D."/>
            <person name="Li Q."/>
            <person name="Dong W."/>
            <person name="Yan J."/>
            <person name="Gao M."/>
            <person name="Berry C."/>
            <person name="Yuan Z."/>
        </authorList>
    </citation>
    <scope>NUCLEOTIDE SEQUENCE [LARGE SCALE GENOMIC DNA]</scope>
    <source>
        <strain>C3-41</strain>
    </source>
</reference>
<accession>B1HXZ6</accession>
<gene>
    <name evidence="1" type="primary">pckA</name>
    <name type="ordered locus">Bsph_4252</name>
</gene>
<feature type="chain" id="PRO_1000125072" description="Phosphoenolpyruvate carboxykinase (ATP)">
    <location>
        <begin position="1"/>
        <end position="528"/>
    </location>
</feature>
<feature type="binding site" evidence="1">
    <location>
        <position position="56"/>
    </location>
    <ligand>
        <name>substrate</name>
    </ligand>
</feature>
<feature type="binding site" evidence="1">
    <location>
        <position position="192"/>
    </location>
    <ligand>
        <name>substrate</name>
    </ligand>
</feature>
<feature type="binding site" evidence="1">
    <location>
        <position position="198"/>
    </location>
    <ligand>
        <name>ATP</name>
        <dbReference type="ChEBI" id="CHEBI:30616"/>
    </ligand>
</feature>
<feature type="binding site" evidence="1">
    <location>
        <position position="198"/>
    </location>
    <ligand>
        <name>Mn(2+)</name>
        <dbReference type="ChEBI" id="CHEBI:29035"/>
    </ligand>
</feature>
<feature type="binding site" evidence="1">
    <location>
        <position position="198"/>
    </location>
    <ligand>
        <name>substrate</name>
    </ligand>
</feature>
<feature type="binding site" evidence="1">
    <location>
        <position position="217"/>
    </location>
    <ligand>
        <name>ATP</name>
        <dbReference type="ChEBI" id="CHEBI:30616"/>
    </ligand>
</feature>
<feature type="binding site" evidence="1">
    <location>
        <position position="217"/>
    </location>
    <ligand>
        <name>Mn(2+)</name>
        <dbReference type="ChEBI" id="CHEBI:29035"/>
    </ligand>
</feature>
<feature type="binding site" evidence="1">
    <location>
        <begin position="233"/>
        <end position="241"/>
    </location>
    <ligand>
        <name>ATP</name>
        <dbReference type="ChEBI" id="CHEBI:30616"/>
    </ligand>
</feature>
<feature type="binding site" evidence="1">
    <location>
        <position position="254"/>
    </location>
    <ligand>
        <name>Mn(2+)</name>
        <dbReference type="ChEBI" id="CHEBI:29035"/>
    </ligand>
</feature>
<feature type="binding site" evidence="1">
    <location>
        <position position="282"/>
    </location>
    <ligand>
        <name>ATP</name>
        <dbReference type="ChEBI" id="CHEBI:30616"/>
    </ligand>
</feature>
<feature type="binding site" evidence="1">
    <location>
        <position position="319"/>
    </location>
    <ligand>
        <name>ATP</name>
        <dbReference type="ChEBI" id="CHEBI:30616"/>
    </ligand>
</feature>
<feature type="binding site" evidence="1">
    <location>
        <position position="319"/>
    </location>
    <ligand>
        <name>substrate</name>
    </ligand>
</feature>
<feature type="binding site" evidence="1">
    <location>
        <position position="444"/>
    </location>
    <ligand>
        <name>ATP</name>
        <dbReference type="ChEBI" id="CHEBI:30616"/>
    </ligand>
</feature>
<protein>
    <recommendedName>
        <fullName evidence="1">Phosphoenolpyruvate carboxykinase (ATP)</fullName>
        <shortName evidence="1">PCK</shortName>
        <shortName evidence="1">PEP carboxykinase</shortName>
        <shortName evidence="1">PEPCK</shortName>
        <ecNumber evidence="1">4.1.1.49</ecNumber>
    </recommendedName>
</protein>